<keyword id="KW-0997">Cell inner membrane</keyword>
<keyword id="KW-1003">Cell membrane</keyword>
<keyword id="KW-0342">GTP-binding</keyword>
<keyword id="KW-0378">Hydrolase</keyword>
<keyword id="KW-0472">Membrane</keyword>
<keyword id="KW-0547">Nucleotide-binding</keyword>
<keyword id="KW-0648">Protein biosynthesis</keyword>
<keyword id="KW-1185">Reference proteome</keyword>
<comment type="function">
    <text evidence="1">Required for accurate and efficient protein synthesis under certain stress conditions. May act as a fidelity factor of the translation reaction, by catalyzing a one-codon backward translocation of tRNAs on improperly translocated ribosomes. Back-translocation proceeds from a post-translocation (POST) complex to a pre-translocation (PRE) complex, thus giving elongation factor G a second chance to translocate the tRNAs correctly. Binds to ribosomes in a GTP-dependent manner.</text>
</comment>
<comment type="catalytic activity">
    <reaction evidence="1">
        <text>GTP + H2O = GDP + phosphate + H(+)</text>
        <dbReference type="Rhea" id="RHEA:19669"/>
        <dbReference type="ChEBI" id="CHEBI:15377"/>
        <dbReference type="ChEBI" id="CHEBI:15378"/>
        <dbReference type="ChEBI" id="CHEBI:37565"/>
        <dbReference type="ChEBI" id="CHEBI:43474"/>
        <dbReference type="ChEBI" id="CHEBI:58189"/>
        <dbReference type="EC" id="3.6.5.n1"/>
    </reaction>
</comment>
<comment type="subcellular location">
    <subcellularLocation>
        <location evidence="1">Cell inner membrane</location>
        <topology evidence="1">Peripheral membrane protein</topology>
        <orientation evidence="1">Cytoplasmic side</orientation>
    </subcellularLocation>
</comment>
<comment type="similarity">
    <text evidence="1">Belongs to the TRAFAC class translation factor GTPase superfamily. Classic translation factor GTPase family. LepA subfamily.</text>
</comment>
<sequence length="597" mass="65707">MQHIRNFSIIAHIDHGKSTLADRLIQRCGGLAAREMSAQVLDSMDIERERGITIKAQTAALEYKAQDGKVYNLNLIDTPGHVDFSYEVSRSLSACEGALLVVDASQGVEAQTVANCYTAIDLGVEVLAVLNKMDLPQADPEGARQEVEDVIGIDASDAVLASAKTGMGIDEILEAIVARVPSPEGDPEAALQALIIDSWFDNYVGVVMLVRIVNGVLRPKDKILLMASGATHLCEQTGVFTPKSQPRAQLSAGEVGFIIAGIKELAHAKVGDTITLAGKPAAAPLPGFKEVQPQVFAGLYPVESSEYDQLRDSLEKLKLNDAALMFEPEVSQALGFGFRCGFLGLLHMEIVQERLEREFDMDIITTAPSVVYEVVERDGTVLTIESPSRMPEVGKIAEIREPIVKVTLFMPQEYVGPVMTLCNNKRGNQINMTYHGRQVHLTYEIPLAEIVLDFFDRLKSVSRGYASMDYEFLEYRPADVVKVDLLINGDRVDALAMIVHRSNARYRARDVVSRMRALIPRQMYDVAIQAAIGAEVIARENVKALRKNVLAKCYGGDISRKKKLLEKQKAGKKRMKQVGTVEIPQEAFLAILQVEDK</sequence>
<gene>
    <name evidence="1" type="primary">lepA</name>
    <name type="ordered locus">BAV1129</name>
</gene>
<organism>
    <name type="scientific">Bordetella avium (strain 197N)</name>
    <dbReference type="NCBI Taxonomy" id="360910"/>
    <lineage>
        <taxon>Bacteria</taxon>
        <taxon>Pseudomonadati</taxon>
        <taxon>Pseudomonadota</taxon>
        <taxon>Betaproteobacteria</taxon>
        <taxon>Burkholderiales</taxon>
        <taxon>Alcaligenaceae</taxon>
        <taxon>Bordetella</taxon>
    </lineage>
</organism>
<protein>
    <recommendedName>
        <fullName evidence="1">Elongation factor 4</fullName>
        <shortName evidence="1">EF-4</shortName>
        <ecNumber evidence="1">3.6.5.n1</ecNumber>
    </recommendedName>
    <alternativeName>
        <fullName evidence="1">Ribosomal back-translocase LepA</fullName>
    </alternativeName>
</protein>
<dbReference type="EC" id="3.6.5.n1" evidence="1"/>
<dbReference type="EMBL" id="AM167904">
    <property type="protein sequence ID" value="CAJ48738.1"/>
    <property type="molecule type" value="Genomic_DNA"/>
</dbReference>
<dbReference type="RefSeq" id="WP_012416812.1">
    <property type="nucleotide sequence ID" value="NC_010645.1"/>
</dbReference>
<dbReference type="SMR" id="Q2KWY3"/>
<dbReference type="STRING" id="360910.BAV1129"/>
<dbReference type="GeneID" id="92935678"/>
<dbReference type="KEGG" id="bav:BAV1129"/>
<dbReference type="eggNOG" id="COG0481">
    <property type="taxonomic scope" value="Bacteria"/>
</dbReference>
<dbReference type="HOGENOM" id="CLU_009995_3_3_4"/>
<dbReference type="OrthoDB" id="9801472at2"/>
<dbReference type="Proteomes" id="UP000001977">
    <property type="component" value="Chromosome"/>
</dbReference>
<dbReference type="GO" id="GO:0005886">
    <property type="term" value="C:plasma membrane"/>
    <property type="evidence" value="ECO:0007669"/>
    <property type="project" value="UniProtKB-SubCell"/>
</dbReference>
<dbReference type="GO" id="GO:0005525">
    <property type="term" value="F:GTP binding"/>
    <property type="evidence" value="ECO:0007669"/>
    <property type="project" value="UniProtKB-UniRule"/>
</dbReference>
<dbReference type="GO" id="GO:0003924">
    <property type="term" value="F:GTPase activity"/>
    <property type="evidence" value="ECO:0007669"/>
    <property type="project" value="UniProtKB-UniRule"/>
</dbReference>
<dbReference type="GO" id="GO:0097216">
    <property type="term" value="F:guanosine tetraphosphate binding"/>
    <property type="evidence" value="ECO:0007669"/>
    <property type="project" value="UniProtKB-ARBA"/>
</dbReference>
<dbReference type="GO" id="GO:0043022">
    <property type="term" value="F:ribosome binding"/>
    <property type="evidence" value="ECO:0007669"/>
    <property type="project" value="UniProtKB-UniRule"/>
</dbReference>
<dbReference type="GO" id="GO:0003746">
    <property type="term" value="F:translation elongation factor activity"/>
    <property type="evidence" value="ECO:0007669"/>
    <property type="project" value="UniProtKB-UniRule"/>
</dbReference>
<dbReference type="GO" id="GO:0045727">
    <property type="term" value="P:positive regulation of translation"/>
    <property type="evidence" value="ECO:0007669"/>
    <property type="project" value="UniProtKB-UniRule"/>
</dbReference>
<dbReference type="CDD" id="cd03699">
    <property type="entry name" value="EF4_II"/>
    <property type="match status" value="1"/>
</dbReference>
<dbReference type="CDD" id="cd16260">
    <property type="entry name" value="EF4_III"/>
    <property type="match status" value="1"/>
</dbReference>
<dbReference type="CDD" id="cd01890">
    <property type="entry name" value="LepA"/>
    <property type="match status" value="1"/>
</dbReference>
<dbReference type="CDD" id="cd03709">
    <property type="entry name" value="lepA_C"/>
    <property type="match status" value="1"/>
</dbReference>
<dbReference type="FunFam" id="3.40.50.300:FF:000078">
    <property type="entry name" value="Elongation factor 4"/>
    <property type="match status" value="1"/>
</dbReference>
<dbReference type="FunFam" id="2.40.30.10:FF:000015">
    <property type="entry name" value="Translation factor GUF1, mitochondrial"/>
    <property type="match status" value="1"/>
</dbReference>
<dbReference type="FunFam" id="3.30.70.240:FF:000007">
    <property type="entry name" value="Translation factor GUF1, mitochondrial"/>
    <property type="match status" value="1"/>
</dbReference>
<dbReference type="FunFam" id="3.30.70.2570:FF:000001">
    <property type="entry name" value="Translation factor GUF1, mitochondrial"/>
    <property type="match status" value="1"/>
</dbReference>
<dbReference type="FunFam" id="3.30.70.870:FF:000004">
    <property type="entry name" value="Translation factor GUF1, mitochondrial"/>
    <property type="match status" value="1"/>
</dbReference>
<dbReference type="Gene3D" id="3.30.70.240">
    <property type="match status" value="1"/>
</dbReference>
<dbReference type="Gene3D" id="3.30.70.2570">
    <property type="entry name" value="Elongation factor 4, C-terminal domain"/>
    <property type="match status" value="1"/>
</dbReference>
<dbReference type="Gene3D" id="3.30.70.870">
    <property type="entry name" value="Elongation Factor G (Translational Gtpase), domain 3"/>
    <property type="match status" value="1"/>
</dbReference>
<dbReference type="Gene3D" id="3.40.50.300">
    <property type="entry name" value="P-loop containing nucleotide triphosphate hydrolases"/>
    <property type="match status" value="1"/>
</dbReference>
<dbReference type="Gene3D" id="2.40.30.10">
    <property type="entry name" value="Translation factors"/>
    <property type="match status" value="1"/>
</dbReference>
<dbReference type="HAMAP" id="MF_00071">
    <property type="entry name" value="LepA"/>
    <property type="match status" value="1"/>
</dbReference>
<dbReference type="InterPro" id="IPR006297">
    <property type="entry name" value="EF-4"/>
</dbReference>
<dbReference type="InterPro" id="IPR035647">
    <property type="entry name" value="EFG_III/V"/>
</dbReference>
<dbReference type="InterPro" id="IPR000640">
    <property type="entry name" value="EFG_V-like"/>
</dbReference>
<dbReference type="InterPro" id="IPR004161">
    <property type="entry name" value="EFTu-like_2"/>
</dbReference>
<dbReference type="InterPro" id="IPR031157">
    <property type="entry name" value="G_TR_CS"/>
</dbReference>
<dbReference type="InterPro" id="IPR038363">
    <property type="entry name" value="LepA_C_sf"/>
</dbReference>
<dbReference type="InterPro" id="IPR013842">
    <property type="entry name" value="LepA_CTD"/>
</dbReference>
<dbReference type="InterPro" id="IPR035654">
    <property type="entry name" value="LepA_IV"/>
</dbReference>
<dbReference type="InterPro" id="IPR027417">
    <property type="entry name" value="P-loop_NTPase"/>
</dbReference>
<dbReference type="InterPro" id="IPR005225">
    <property type="entry name" value="Small_GTP-bd"/>
</dbReference>
<dbReference type="InterPro" id="IPR000795">
    <property type="entry name" value="T_Tr_GTP-bd_dom"/>
</dbReference>
<dbReference type="InterPro" id="IPR009000">
    <property type="entry name" value="Transl_B-barrel_sf"/>
</dbReference>
<dbReference type="NCBIfam" id="TIGR01393">
    <property type="entry name" value="lepA"/>
    <property type="match status" value="1"/>
</dbReference>
<dbReference type="NCBIfam" id="TIGR00231">
    <property type="entry name" value="small_GTP"/>
    <property type="match status" value="1"/>
</dbReference>
<dbReference type="PANTHER" id="PTHR43512:SF4">
    <property type="entry name" value="TRANSLATION FACTOR GUF1 HOMOLOG, CHLOROPLASTIC"/>
    <property type="match status" value="1"/>
</dbReference>
<dbReference type="PANTHER" id="PTHR43512">
    <property type="entry name" value="TRANSLATION FACTOR GUF1-RELATED"/>
    <property type="match status" value="1"/>
</dbReference>
<dbReference type="Pfam" id="PF00679">
    <property type="entry name" value="EFG_C"/>
    <property type="match status" value="1"/>
</dbReference>
<dbReference type="Pfam" id="PF00009">
    <property type="entry name" value="GTP_EFTU"/>
    <property type="match status" value="1"/>
</dbReference>
<dbReference type="Pfam" id="PF03144">
    <property type="entry name" value="GTP_EFTU_D2"/>
    <property type="match status" value="1"/>
</dbReference>
<dbReference type="Pfam" id="PF06421">
    <property type="entry name" value="LepA_C"/>
    <property type="match status" value="1"/>
</dbReference>
<dbReference type="PRINTS" id="PR00315">
    <property type="entry name" value="ELONGATNFCT"/>
</dbReference>
<dbReference type="SMART" id="SM00838">
    <property type="entry name" value="EFG_C"/>
    <property type="match status" value="1"/>
</dbReference>
<dbReference type="SUPFAM" id="SSF54980">
    <property type="entry name" value="EF-G C-terminal domain-like"/>
    <property type="match status" value="2"/>
</dbReference>
<dbReference type="SUPFAM" id="SSF52540">
    <property type="entry name" value="P-loop containing nucleoside triphosphate hydrolases"/>
    <property type="match status" value="1"/>
</dbReference>
<dbReference type="SUPFAM" id="SSF50447">
    <property type="entry name" value="Translation proteins"/>
    <property type="match status" value="1"/>
</dbReference>
<dbReference type="PROSITE" id="PS00301">
    <property type="entry name" value="G_TR_1"/>
    <property type="match status" value="1"/>
</dbReference>
<dbReference type="PROSITE" id="PS51722">
    <property type="entry name" value="G_TR_2"/>
    <property type="match status" value="1"/>
</dbReference>
<name>LEPA_BORA1</name>
<accession>Q2KWY3</accession>
<evidence type="ECO:0000255" key="1">
    <source>
        <dbReference type="HAMAP-Rule" id="MF_00071"/>
    </source>
</evidence>
<feature type="chain" id="PRO_0000265640" description="Elongation factor 4">
    <location>
        <begin position="1"/>
        <end position="597"/>
    </location>
</feature>
<feature type="domain" description="tr-type G">
    <location>
        <begin position="2"/>
        <end position="184"/>
    </location>
</feature>
<feature type="binding site" evidence="1">
    <location>
        <begin position="14"/>
        <end position="19"/>
    </location>
    <ligand>
        <name>GTP</name>
        <dbReference type="ChEBI" id="CHEBI:37565"/>
    </ligand>
</feature>
<feature type="binding site" evidence="1">
    <location>
        <begin position="131"/>
        <end position="134"/>
    </location>
    <ligand>
        <name>GTP</name>
        <dbReference type="ChEBI" id="CHEBI:37565"/>
    </ligand>
</feature>
<proteinExistence type="inferred from homology"/>
<reference key="1">
    <citation type="journal article" date="2006" name="J. Bacteriol.">
        <title>Comparison of the genome sequence of the poultry pathogen Bordetella avium with those of B. bronchiseptica, B. pertussis, and B. parapertussis reveals extensive diversity in surface structures associated with host interaction.</title>
        <authorList>
            <person name="Sebaihia M."/>
            <person name="Preston A."/>
            <person name="Maskell D.J."/>
            <person name="Kuzmiak H."/>
            <person name="Connell T.D."/>
            <person name="King N.D."/>
            <person name="Orndorff P.E."/>
            <person name="Miyamoto D.M."/>
            <person name="Thomson N.R."/>
            <person name="Harris D."/>
            <person name="Goble A."/>
            <person name="Lord A."/>
            <person name="Murphy L."/>
            <person name="Quail M.A."/>
            <person name="Rutter S."/>
            <person name="Squares R."/>
            <person name="Squares S."/>
            <person name="Woodward J."/>
            <person name="Parkhill J."/>
            <person name="Temple L.M."/>
        </authorList>
    </citation>
    <scope>NUCLEOTIDE SEQUENCE [LARGE SCALE GENOMIC DNA]</scope>
    <source>
        <strain>197N</strain>
    </source>
</reference>